<gene>
    <name type="ordered locus">DIP1703</name>
</gene>
<organism>
    <name type="scientific">Corynebacterium diphtheriae (strain ATCC 700971 / NCTC 13129 / Biotype gravis)</name>
    <dbReference type="NCBI Taxonomy" id="257309"/>
    <lineage>
        <taxon>Bacteria</taxon>
        <taxon>Bacillati</taxon>
        <taxon>Actinomycetota</taxon>
        <taxon>Actinomycetes</taxon>
        <taxon>Mycobacteriales</taxon>
        <taxon>Corynebacteriaceae</taxon>
        <taxon>Corynebacterium</taxon>
    </lineage>
</organism>
<proteinExistence type="inferred from homology"/>
<accession>Q6NG30</accession>
<feature type="chain" id="PRO_1000138916" description="Deoxyguanosinetriphosphate triphosphohydrolase-like protein">
    <location>
        <begin position="1"/>
        <end position="423"/>
    </location>
</feature>
<feature type="domain" description="HD" evidence="2">
    <location>
        <begin position="66"/>
        <end position="216"/>
    </location>
</feature>
<evidence type="ECO:0000255" key="1">
    <source>
        <dbReference type="HAMAP-Rule" id="MF_01212"/>
    </source>
</evidence>
<evidence type="ECO:0000255" key="2">
    <source>
        <dbReference type="PROSITE-ProRule" id="PRU01175"/>
    </source>
</evidence>
<reference key="1">
    <citation type="journal article" date="2003" name="Nucleic Acids Res.">
        <title>The complete genome sequence and analysis of Corynebacterium diphtheriae NCTC13129.</title>
        <authorList>
            <person name="Cerdeno-Tarraga A.-M."/>
            <person name="Efstratiou A."/>
            <person name="Dover L.G."/>
            <person name="Holden M.T.G."/>
            <person name="Pallen M.J."/>
            <person name="Bentley S.D."/>
            <person name="Besra G.S."/>
            <person name="Churcher C.M."/>
            <person name="James K.D."/>
            <person name="De Zoysa A."/>
            <person name="Chillingworth T."/>
            <person name="Cronin A."/>
            <person name="Dowd L."/>
            <person name="Feltwell T."/>
            <person name="Hamlin N."/>
            <person name="Holroyd S."/>
            <person name="Jagels K."/>
            <person name="Moule S."/>
            <person name="Quail M.A."/>
            <person name="Rabbinowitsch E."/>
            <person name="Rutherford K.M."/>
            <person name="Thomson N.R."/>
            <person name="Unwin L."/>
            <person name="Whitehead S."/>
            <person name="Barrell B.G."/>
            <person name="Parkhill J."/>
        </authorList>
    </citation>
    <scope>NUCLEOTIDE SEQUENCE [LARGE SCALE GENOMIC DNA]</scope>
    <source>
        <strain>ATCC 700971 / NCTC 13129 / Biotype gravis</strain>
    </source>
</reference>
<name>DGTL1_CORDI</name>
<keyword id="KW-0378">Hydrolase</keyword>
<keyword id="KW-1185">Reference proteome</keyword>
<dbReference type="EMBL" id="BX248359">
    <property type="protein sequence ID" value="CAE50232.1"/>
    <property type="molecule type" value="Genomic_DNA"/>
</dbReference>
<dbReference type="RefSeq" id="WP_010935267.1">
    <property type="nucleotide sequence ID" value="NC_002935.2"/>
</dbReference>
<dbReference type="SMR" id="Q6NG30"/>
<dbReference type="STRING" id="257309.DIP1703"/>
<dbReference type="KEGG" id="cdi:DIP1703"/>
<dbReference type="HOGENOM" id="CLU_028163_0_1_11"/>
<dbReference type="Proteomes" id="UP000002198">
    <property type="component" value="Chromosome"/>
</dbReference>
<dbReference type="GO" id="GO:0008832">
    <property type="term" value="F:dGTPase activity"/>
    <property type="evidence" value="ECO:0007669"/>
    <property type="project" value="TreeGrafter"/>
</dbReference>
<dbReference type="GO" id="GO:0006203">
    <property type="term" value="P:dGTP catabolic process"/>
    <property type="evidence" value="ECO:0007669"/>
    <property type="project" value="TreeGrafter"/>
</dbReference>
<dbReference type="CDD" id="cd00077">
    <property type="entry name" value="HDc"/>
    <property type="match status" value="1"/>
</dbReference>
<dbReference type="Gene3D" id="1.10.3210.10">
    <property type="entry name" value="Hypothetical protein af1432"/>
    <property type="match status" value="1"/>
</dbReference>
<dbReference type="HAMAP" id="MF_01212">
    <property type="entry name" value="dGTPase_type2"/>
    <property type="match status" value="1"/>
</dbReference>
<dbReference type="InterPro" id="IPR006261">
    <property type="entry name" value="dGTPase"/>
</dbReference>
<dbReference type="InterPro" id="IPR050135">
    <property type="entry name" value="dGTPase-like"/>
</dbReference>
<dbReference type="InterPro" id="IPR023023">
    <property type="entry name" value="dNTPase_2"/>
</dbReference>
<dbReference type="InterPro" id="IPR003607">
    <property type="entry name" value="HD/PDEase_dom"/>
</dbReference>
<dbReference type="InterPro" id="IPR006674">
    <property type="entry name" value="HD_domain"/>
</dbReference>
<dbReference type="InterPro" id="IPR026875">
    <property type="entry name" value="PHydrolase_assoc_dom"/>
</dbReference>
<dbReference type="NCBIfam" id="TIGR01353">
    <property type="entry name" value="dGTP_triPase"/>
    <property type="match status" value="1"/>
</dbReference>
<dbReference type="NCBIfam" id="NF002829">
    <property type="entry name" value="PRK03007.1"/>
    <property type="match status" value="1"/>
</dbReference>
<dbReference type="PANTHER" id="PTHR11373:SF32">
    <property type="entry name" value="DEOXYGUANOSINETRIPHOSPHATE TRIPHOSPHOHYDROLASE"/>
    <property type="match status" value="1"/>
</dbReference>
<dbReference type="PANTHER" id="PTHR11373">
    <property type="entry name" value="DEOXYNUCLEOSIDE TRIPHOSPHATE TRIPHOSPHOHYDROLASE"/>
    <property type="match status" value="1"/>
</dbReference>
<dbReference type="Pfam" id="PF01966">
    <property type="entry name" value="HD"/>
    <property type="match status" value="1"/>
</dbReference>
<dbReference type="Pfam" id="PF13286">
    <property type="entry name" value="HD_assoc"/>
    <property type="match status" value="1"/>
</dbReference>
<dbReference type="SMART" id="SM00471">
    <property type="entry name" value="HDc"/>
    <property type="match status" value="1"/>
</dbReference>
<dbReference type="SUPFAM" id="SSF109604">
    <property type="entry name" value="HD-domain/PDEase-like"/>
    <property type="match status" value="1"/>
</dbReference>
<dbReference type="PROSITE" id="PS51831">
    <property type="entry name" value="HD"/>
    <property type="match status" value="1"/>
</dbReference>
<sequence length="423" mass="46728">MFSYSSSDWQRRFDEPEKPSRIIAHHDERGPFAKDRARVLHSAALRRLADKTQVVGPRDGDNPRTRLTHSLEVAQIARGIGTGLGLDADLCEMAGLTHDIGHPPYGHNGEKALAEIAQDCGGFEGNAQTLRILSKLEPKIVDDHDQSYGLNLTRAALDAACKYPRTKTNPDGSVNKKYGCYDEDAHILQWVRQGHEDTSACVEAQAMDFSDDIAYSVHDVEDGIVSGRVHLGVLWDFVELAELAEKGARAFGGTPEALVDAADHLRELPIISAAADFDGSLRGYVDLKAMTSQLVGRYVGAVIEASRAANPTGVFGRSTGQVVVPDQVLAEVTLLKTIAVLYVMDDPTHRQRQDRQRERIYRVYDYLVAGGRGALDPMFRLWWEQAESEAQRQRVIIDNISSMTESRLERVAKQSAELSSFMG</sequence>
<comment type="similarity">
    <text evidence="1">Belongs to the dGTPase family. Type 2 subfamily.</text>
</comment>
<protein>
    <recommendedName>
        <fullName evidence="1">Deoxyguanosinetriphosphate triphosphohydrolase-like protein</fullName>
    </recommendedName>
</protein>